<keyword id="KW-0028">Amino-acid biosynthesis</keyword>
<keyword id="KW-0067">ATP-binding</keyword>
<keyword id="KW-0963">Cytoplasm</keyword>
<keyword id="KW-0368">Histidine biosynthesis</keyword>
<keyword id="KW-0378">Hydrolase</keyword>
<keyword id="KW-0547">Nucleotide-binding</keyword>
<keyword id="KW-1185">Reference proteome</keyword>
<gene>
    <name type="primary">hisE</name>
    <name type="ordered locus">R00050</name>
    <name type="ORF">SMc02568</name>
</gene>
<dbReference type="EC" id="3.6.1.31"/>
<dbReference type="EMBL" id="AL591688">
    <property type="protein sequence ID" value="CAC41437.1"/>
    <property type="molecule type" value="Genomic_DNA"/>
</dbReference>
<dbReference type="RefSeq" id="NP_384156.1">
    <property type="nucleotide sequence ID" value="NC_003047.1"/>
</dbReference>
<dbReference type="RefSeq" id="WP_003531991.1">
    <property type="nucleotide sequence ID" value="NC_003047.1"/>
</dbReference>
<dbReference type="SMR" id="Q92TB4"/>
<dbReference type="EnsemblBacteria" id="CAC41437">
    <property type="protein sequence ID" value="CAC41437"/>
    <property type="gene ID" value="SMc02568"/>
</dbReference>
<dbReference type="KEGG" id="sme:SMc02568"/>
<dbReference type="PATRIC" id="fig|266834.11.peg.1404"/>
<dbReference type="eggNOG" id="COG0140">
    <property type="taxonomic scope" value="Bacteria"/>
</dbReference>
<dbReference type="HOGENOM" id="CLU_123337_1_1_5"/>
<dbReference type="OrthoDB" id="9814738at2"/>
<dbReference type="UniPathway" id="UPA00031">
    <property type="reaction ID" value="UER00007"/>
</dbReference>
<dbReference type="Proteomes" id="UP000001976">
    <property type="component" value="Chromosome"/>
</dbReference>
<dbReference type="GO" id="GO:0005737">
    <property type="term" value="C:cytoplasm"/>
    <property type="evidence" value="ECO:0007669"/>
    <property type="project" value="UniProtKB-SubCell"/>
</dbReference>
<dbReference type="GO" id="GO:0005524">
    <property type="term" value="F:ATP binding"/>
    <property type="evidence" value="ECO:0007669"/>
    <property type="project" value="UniProtKB-KW"/>
</dbReference>
<dbReference type="GO" id="GO:0004636">
    <property type="term" value="F:phosphoribosyl-ATP diphosphatase activity"/>
    <property type="evidence" value="ECO:0007669"/>
    <property type="project" value="UniProtKB-UniRule"/>
</dbReference>
<dbReference type="GO" id="GO:0000105">
    <property type="term" value="P:L-histidine biosynthetic process"/>
    <property type="evidence" value="ECO:0007669"/>
    <property type="project" value="UniProtKB-UniRule"/>
</dbReference>
<dbReference type="CDD" id="cd11534">
    <property type="entry name" value="NTP-PPase_HisIE_like"/>
    <property type="match status" value="1"/>
</dbReference>
<dbReference type="Gene3D" id="1.10.287.1080">
    <property type="entry name" value="MazG-like"/>
    <property type="match status" value="1"/>
</dbReference>
<dbReference type="HAMAP" id="MF_01020">
    <property type="entry name" value="HisE"/>
    <property type="match status" value="1"/>
</dbReference>
<dbReference type="InterPro" id="IPR008179">
    <property type="entry name" value="HisE"/>
</dbReference>
<dbReference type="InterPro" id="IPR021130">
    <property type="entry name" value="PRib-ATP_PPHydrolase-like"/>
</dbReference>
<dbReference type="NCBIfam" id="TIGR03188">
    <property type="entry name" value="histidine_hisI"/>
    <property type="match status" value="1"/>
</dbReference>
<dbReference type="NCBIfam" id="NF001611">
    <property type="entry name" value="PRK00400.1-3"/>
    <property type="match status" value="1"/>
</dbReference>
<dbReference type="NCBIfam" id="NF001613">
    <property type="entry name" value="PRK00400.1-5"/>
    <property type="match status" value="1"/>
</dbReference>
<dbReference type="PANTHER" id="PTHR42945">
    <property type="entry name" value="HISTIDINE BIOSYNTHESIS BIFUNCTIONAL PROTEIN"/>
    <property type="match status" value="1"/>
</dbReference>
<dbReference type="PANTHER" id="PTHR42945:SF1">
    <property type="entry name" value="HISTIDINE BIOSYNTHESIS BIFUNCTIONAL PROTEIN HIS7"/>
    <property type="match status" value="1"/>
</dbReference>
<dbReference type="Pfam" id="PF01503">
    <property type="entry name" value="PRA-PH"/>
    <property type="match status" value="1"/>
</dbReference>
<dbReference type="SUPFAM" id="SSF101386">
    <property type="entry name" value="all-alpha NTP pyrophosphatases"/>
    <property type="match status" value="1"/>
</dbReference>
<sequence length="107" mass="11619">MTDFTLSDLEKIVATRARAAPEESWTAKLVAAGQTKAAKKLGEEAVETVIAAIGEDRKNLVDESADLLYHLMVVLNIAAVPLQDVMSELARRTSQSGLQEKANRQNP</sequence>
<protein>
    <recommendedName>
        <fullName>Phosphoribosyl-ATP pyrophosphatase</fullName>
        <shortName>PRA-PH</shortName>
        <ecNumber>3.6.1.31</ecNumber>
    </recommendedName>
</protein>
<proteinExistence type="inferred from homology"/>
<reference key="1">
    <citation type="journal article" date="2001" name="Proc. Natl. Acad. Sci. U.S.A.">
        <title>Analysis of the chromosome sequence of the legume symbiont Sinorhizobium meliloti strain 1021.</title>
        <authorList>
            <person name="Capela D."/>
            <person name="Barloy-Hubler F."/>
            <person name="Gouzy J."/>
            <person name="Bothe G."/>
            <person name="Ampe F."/>
            <person name="Batut J."/>
            <person name="Boistard P."/>
            <person name="Becker A."/>
            <person name="Boutry M."/>
            <person name="Cadieu E."/>
            <person name="Dreano S."/>
            <person name="Gloux S."/>
            <person name="Godrie T."/>
            <person name="Goffeau A."/>
            <person name="Kahn D."/>
            <person name="Kiss E."/>
            <person name="Lelaure V."/>
            <person name="Masuy D."/>
            <person name="Pohl T."/>
            <person name="Portetelle D."/>
            <person name="Puehler A."/>
            <person name="Purnelle B."/>
            <person name="Ramsperger U."/>
            <person name="Renard C."/>
            <person name="Thebault P."/>
            <person name="Vandenbol M."/>
            <person name="Weidner S."/>
            <person name="Galibert F."/>
        </authorList>
    </citation>
    <scope>NUCLEOTIDE SEQUENCE [LARGE SCALE GENOMIC DNA]</scope>
    <source>
        <strain>1021</strain>
    </source>
</reference>
<reference key="2">
    <citation type="journal article" date="2001" name="Science">
        <title>The composite genome of the legume symbiont Sinorhizobium meliloti.</title>
        <authorList>
            <person name="Galibert F."/>
            <person name="Finan T.M."/>
            <person name="Long S.R."/>
            <person name="Puehler A."/>
            <person name="Abola P."/>
            <person name="Ampe F."/>
            <person name="Barloy-Hubler F."/>
            <person name="Barnett M.J."/>
            <person name="Becker A."/>
            <person name="Boistard P."/>
            <person name="Bothe G."/>
            <person name="Boutry M."/>
            <person name="Bowser L."/>
            <person name="Buhrmester J."/>
            <person name="Cadieu E."/>
            <person name="Capela D."/>
            <person name="Chain P."/>
            <person name="Cowie A."/>
            <person name="Davis R.W."/>
            <person name="Dreano S."/>
            <person name="Federspiel N.A."/>
            <person name="Fisher R.F."/>
            <person name="Gloux S."/>
            <person name="Godrie T."/>
            <person name="Goffeau A."/>
            <person name="Golding B."/>
            <person name="Gouzy J."/>
            <person name="Gurjal M."/>
            <person name="Hernandez-Lucas I."/>
            <person name="Hong A."/>
            <person name="Huizar L."/>
            <person name="Hyman R.W."/>
            <person name="Jones T."/>
            <person name="Kahn D."/>
            <person name="Kahn M.L."/>
            <person name="Kalman S."/>
            <person name="Keating D.H."/>
            <person name="Kiss E."/>
            <person name="Komp C."/>
            <person name="Lelaure V."/>
            <person name="Masuy D."/>
            <person name="Palm C."/>
            <person name="Peck M.C."/>
            <person name="Pohl T.M."/>
            <person name="Portetelle D."/>
            <person name="Purnelle B."/>
            <person name="Ramsperger U."/>
            <person name="Surzycki R."/>
            <person name="Thebault P."/>
            <person name="Vandenbol M."/>
            <person name="Vorhoelter F.J."/>
            <person name="Weidner S."/>
            <person name="Wells D.H."/>
            <person name="Wong K."/>
            <person name="Yeh K.-C."/>
            <person name="Batut J."/>
        </authorList>
    </citation>
    <scope>NUCLEOTIDE SEQUENCE [LARGE SCALE GENOMIC DNA]</scope>
    <source>
        <strain>1021</strain>
    </source>
</reference>
<evidence type="ECO:0000250" key="1"/>
<evidence type="ECO:0000305" key="2"/>
<comment type="catalytic activity">
    <reaction>
        <text>1-(5-phospho-beta-D-ribosyl)-ATP + H2O = 1-(5-phospho-beta-D-ribosyl)-5'-AMP + diphosphate + H(+)</text>
        <dbReference type="Rhea" id="RHEA:22828"/>
        <dbReference type="ChEBI" id="CHEBI:15377"/>
        <dbReference type="ChEBI" id="CHEBI:15378"/>
        <dbReference type="ChEBI" id="CHEBI:33019"/>
        <dbReference type="ChEBI" id="CHEBI:59457"/>
        <dbReference type="ChEBI" id="CHEBI:73183"/>
        <dbReference type="EC" id="3.6.1.31"/>
    </reaction>
</comment>
<comment type="pathway">
    <text>Amino-acid biosynthesis; L-histidine biosynthesis; L-histidine from 5-phospho-alpha-D-ribose 1-diphosphate: step 2/9.</text>
</comment>
<comment type="subcellular location">
    <subcellularLocation>
        <location evidence="1">Cytoplasm</location>
    </subcellularLocation>
</comment>
<comment type="similarity">
    <text evidence="2">Belongs to the PRA-PH family.</text>
</comment>
<name>HIS2_RHIME</name>
<feature type="chain" id="PRO_0000136381" description="Phosphoribosyl-ATP pyrophosphatase">
    <location>
        <begin position="1"/>
        <end position="107"/>
    </location>
</feature>
<organism>
    <name type="scientific">Rhizobium meliloti (strain 1021)</name>
    <name type="common">Ensifer meliloti</name>
    <name type="synonym">Sinorhizobium meliloti</name>
    <dbReference type="NCBI Taxonomy" id="266834"/>
    <lineage>
        <taxon>Bacteria</taxon>
        <taxon>Pseudomonadati</taxon>
        <taxon>Pseudomonadota</taxon>
        <taxon>Alphaproteobacteria</taxon>
        <taxon>Hyphomicrobiales</taxon>
        <taxon>Rhizobiaceae</taxon>
        <taxon>Sinorhizobium/Ensifer group</taxon>
        <taxon>Sinorhizobium</taxon>
    </lineage>
</organism>
<accession>Q92TB4</accession>